<keyword id="KW-0274">FAD</keyword>
<keyword id="KW-0285">Flavoprotein</keyword>
<keyword id="KW-0560">Oxidoreductase</keyword>
<keyword id="KW-1185">Reference proteome</keyword>
<keyword id="KW-0816">Tricarboxylic acid cycle</keyword>
<evidence type="ECO:0000255" key="1">
    <source>
        <dbReference type="HAMAP-Rule" id="MF_00212"/>
    </source>
</evidence>
<comment type="catalytic activity">
    <reaction evidence="1">
        <text>(S)-malate + a quinone = a quinol + oxaloacetate</text>
        <dbReference type="Rhea" id="RHEA:46012"/>
        <dbReference type="ChEBI" id="CHEBI:15589"/>
        <dbReference type="ChEBI" id="CHEBI:16452"/>
        <dbReference type="ChEBI" id="CHEBI:24646"/>
        <dbReference type="ChEBI" id="CHEBI:132124"/>
        <dbReference type="EC" id="1.1.5.4"/>
    </reaction>
</comment>
<comment type="cofactor">
    <cofactor evidence="1">
        <name>FAD</name>
        <dbReference type="ChEBI" id="CHEBI:57692"/>
    </cofactor>
</comment>
<comment type="pathway">
    <text evidence="1">Carbohydrate metabolism; tricarboxylic acid cycle; oxaloacetate from (S)-malate (quinone route): step 1/1.</text>
</comment>
<comment type="similarity">
    <text evidence="1">Belongs to the MQO family.</text>
</comment>
<reference key="1">
    <citation type="journal article" date="2010" name="BMC Genomics">
        <title>Complete genome sequence and lifestyle of black-pigmented Corynebacterium aurimucosum ATCC 700975 (formerly C. nigricans CN-1) isolated from a vaginal swab of a woman with spontaneous abortion.</title>
        <authorList>
            <person name="Trost E."/>
            <person name="Gotker S."/>
            <person name="Schneider J."/>
            <person name="Schneiker-Bekel S."/>
            <person name="Szczepanowski R."/>
            <person name="Tilker A."/>
            <person name="Viehoever P."/>
            <person name="Arnold W."/>
            <person name="Bekel T."/>
            <person name="Blom J."/>
            <person name="Gartemann K.H."/>
            <person name="Linke B."/>
            <person name="Goesmann A."/>
            <person name="Puhler A."/>
            <person name="Shukla S.K."/>
            <person name="Tauch A."/>
        </authorList>
    </citation>
    <scope>NUCLEOTIDE SEQUENCE [LARGE SCALE GENOMIC DNA]</scope>
    <source>
        <strain>ATCC 700975 / DSM 44827 / CIP 107346 / CN-1</strain>
    </source>
</reference>
<gene>
    <name evidence="1" type="primary">mqo</name>
    <name type="ordered locus">cauri_1541</name>
</gene>
<organism>
    <name type="scientific">Corynebacterium aurimucosum (strain ATCC 700975 / DSM 44827 / CIP 107346 / CN-1)</name>
    <name type="common">Corynebacterium nigricans</name>
    <dbReference type="NCBI Taxonomy" id="548476"/>
    <lineage>
        <taxon>Bacteria</taxon>
        <taxon>Bacillati</taxon>
        <taxon>Actinomycetota</taxon>
        <taxon>Actinomycetes</taxon>
        <taxon>Mycobacteriales</taxon>
        <taxon>Corynebacteriaceae</taxon>
        <taxon>Corynebacterium</taxon>
    </lineage>
</organism>
<feature type="chain" id="PRO_1000124767" description="Probable malate:quinone oxidoreductase">
    <location>
        <begin position="1"/>
        <end position="500"/>
    </location>
</feature>
<protein>
    <recommendedName>
        <fullName evidence="1">Probable malate:quinone oxidoreductase</fullName>
        <ecNumber evidence="1">1.1.5.4</ecNumber>
    </recommendedName>
    <alternativeName>
        <fullName evidence="1">MQO</fullName>
    </alternativeName>
    <alternativeName>
        <fullName evidence="1">Malate dehydrogenase [quinone]</fullName>
    </alternativeName>
</protein>
<proteinExistence type="inferred from homology"/>
<sequence length="500" mass="55235">MSSDKKTAQVVDEVEVALIGAGIMSATLGAMLRELEPSWTQMVFERLDGPALESSSPWNNAGTGHSALCELNYTPEKNGRIDISKALNINEKFQVSRQFWSHQLNNGILTDPKAFINPVPHVSFAQGSIQVDYLKRRFDALKDNHMFPNMQFSDDDATFQEKLPLMSQGRDFNSQKVAISWTDAGTDVNFGALAKQFFTAAKAAGTEIRYGHEVVDIKREGSKWRVVAKNLHTGDYQAVHAKFVFVGAGGYALDLLRKAGVREVSGFAGFPVSGLWLRSKNPELVKQHHAKVYGKAAVGAPPMSVPHLDTRVIDGEEGLLFGPYGGWSPKFLKKGSYLDLFKSIRPDNITSYLGVAAQEFGLTKYLVTEVLKDFDKRVETLKEYVPSADPADWETVIAGQRVQVIKPAGAPQFGSLEFGTTLINNPEGNIAGLLGASPGASITPAIMIELLERCFGENMIQWGDKIQEMIPSYGTKLSKDKKLYNEMWEYTQKTLQLESK</sequence>
<dbReference type="EC" id="1.1.5.4" evidence="1"/>
<dbReference type="EMBL" id="CP001601">
    <property type="protein sequence ID" value="ACP33134.1"/>
    <property type="molecule type" value="Genomic_DNA"/>
</dbReference>
<dbReference type="RefSeq" id="WP_010190354.1">
    <property type="nucleotide sequence ID" value="NC_012590.1"/>
</dbReference>
<dbReference type="SMR" id="C3PH30"/>
<dbReference type="STRING" id="548476.cauri_1541"/>
<dbReference type="GeneID" id="31924171"/>
<dbReference type="KEGG" id="car:cauri_1541"/>
<dbReference type="eggNOG" id="COG0579">
    <property type="taxonomic scope" value="Bacteria"/>
</dbReference>
<dbReference type="HOGENOM" id="CLU_028151_0_0_11"/>
<dbReference type="OrthoDB" id="9763983at2"/>
<dbReference type="UniPathway" id="UPA00223">
    <property type="reaction ID" value="UER01008"/>
</dbReference>
<dbReference type="Proteomes" id="UP000002077">
    <property type="component" value="Chromosome"/>
</dbReference>
<dbReference type="GO" id="GO:0047545">
    <property type="term" value="F:2-hydroxyglutarate dehydrogenase activity"/>
    <property type="evidence" value="ECO:0007669"/>
    <property type="project" value="TreeGrafter"/>
</dbReference>
<dbReference type="GO" id="GO:0008924">
    <property type="term" value="F:L-malate dehydrogenase (quinone) activity"/>
    <property type="evidence" value="ECO:0007669"/>
    <property type="project" value="UniProtKB-UniRule"/>
</dbReference>
<dbReference type="GO" id="GO:0006099">
    <property type="term" value="P:tricarboxylic acid cycle"/>
    <property type="evidence" value="ECO:0007669"/>
    <property type="project" value="UniProtKB-UniRule"/>
</dbReference>
<dbReference type="Gene3D" id="3.30.9.10">
    <property type="entry name" value="D-Amino Acid Oxidase, subunit A, domain 2"/>
    <property type="match status" value="1"/>
</dbReference>
<dbReference type="Gene3D" id="3.50.50.60">
    <property type="entry name" value="FAD/NAD(P)-binding domain"/>
    <property type="match status" value="1"/>
</dbReference>
<dbReference type="HAMAP" id="MF_00212">
    <property type="entry name" value="MQO"/>
    <property type="match status" value="1"/>
</dbReference>
<dbReference type="InterPro" id="IPR036188">
    <property type="entry name" value="FAD/NAD-bd_sf"/>
</dbReference>
<dbReference type="InterPro" id="IPR006231">
    <property type="entry name" value="MQO"/>
</dbReference>
<dbReference type="NCBIfam" id="TIGR01320">
    <property type="entry name" value="mal_quin_oxido"/>
    <property type="match status" value="1"/>
</dbReference>
<dbReference type="NCBIfam" id="NF003606">
    <property type="entry name" value="PRK05257.2-1"/>
    <property type="match status" value="1"/>
</dbReference>
<dbReference type="NCBIfam" id="NF003611">
    <property type="entry name" value="PRK05257.3-2"/>
    <property type="match status" value="1"/>
</dbReference>
<dbReference type="NCBIfam" id="NF009875">
    <property type="entry name" value="PRK13339.1"/>
    <property type="match status" value="1"/>
</dbReference>
<dbReference type="PANTHER" id="PTHR43104">
    <property type="entry name" value="L-2-HYDROXYGLUTARATE DEHYDROGENASE, MITOCHONDRIAL"/>
    <property type="match status" value="1"/>
</dbReference>
<dbReference type="PANTHER" id="PTHR43104:SF2">
    <property type="entry name" value="L-2-HYDROXYGLUTARATE DEHYDROGENASE, MITOCHONDRIAL"/>
    <property type="match status" value="1"/>
</dbReference>
<dbReference type="Pfam" id="PF06039">
    <property type="entry name" value="Mqo"/>
    <property type="match status" value="1"/>
</dbReference>
<dbReference type="SUPFAM" id="SSF51905">
    <property type="entry name" value="FAD/NAD(P)-binding domain"/>
    <property type="match status" value="1"/>
</dbReference>
<name>MQO_CORA7</name>
<accession>C3PH30</accession>